<protein>
    <recommendedName>
        <fullName evidence="1">Phosphoglycerate kinase</fullName>
        <ecNumber evidence="1">2.7.2.3</ecNumber>
    </recommendedName>
</protein>
<sequence length="396" mass="40771">MPTFRTLDEADLAGKRVLVRVDLNVPMDEGRVTDDTRIQAILPTIRAITEKGGKAILLSHFGRPKGRDASQSLAPVAAAVGERLGAPVAFAGDCIGSDAEAAVSTLAPGAVLVLENTRFHAGEEKNAADFVQQLAALGDIYVNDAFSAAHRAHASTEGLAHKLPAFAGRSMQKELEALAKALEAPQRPVLAVVGGAKVSSKLELLGNLTAKVDILVIGGGMANTFLAAKGVKVGKSLCEHDLADTARQIIATAASHGCEIVLPVDAVVTKTFAAHADHRVVPVDQVAEDEMILDAGPATVALVREKLKGAKTVVWNGPFGAFELPPFDAATVAVAKAVAEATKAGALLSVAGGGDTVAALNHAGAAGDFSYVSTAGGAFLEWLEGKQLPGVEALRR</sequence>
<keyword id="KW-0067">ATP-binding</keyword>
<keyword id="KW-0963">Cytoplasm</keyword>
<keyword id="KW-0324">Glycolysis</keyword>
<keyword id="KW-0418">Kinase</keyword>
<keyword id="KW-0547">Nucleotide-binding</keyword>
<keyword id="KW-1185">Reference proteome</keyword>
<keyword id="KW-0808">Transferase</keyword>
<comment type="catalytic activity">
    <reaction evidence="1">
        <text>(2R)-3-phosphoglycerate + ATP = (2R)-3-phospho-glyceroyl phosphate + ADP</text>
        <dbReference type="Rhea" id="RHEA:14801"/>
        <dbReference type="ChEBI" id="CHEBI:30616"/>
        <dbReference type="ChEBI" id="CHEBI:57604"/>
        <dbReference type="ChEBI" id="CHEBI:58272"/>
        <dbReference type="ChEBI" id="CHEBI:456216"/>
        <dbReference type="EC" id="2.7.2.3"/>
    </reaction>
</comment>
<comment type="pathway">
    <text evidence="1">Carbohydrate degradation; glycolysis; pyruvate from D-glyceraldehyde 3-phosphate: step 2/5.</text>
</comment>
<comment type="subunit">
    <text evidence="1">Monomer.</text>
</comment>
<comment type="subcellular location">
    <subcellularLocation>
        <location evidence="1">Cytoplasm</location>
    </subcellularLocation>
</comment>
<comment type="similarity">
    <text evidence="1">Belongs to the phosphoglycerate kinase family.</text>
</comment>
<accession>A8IM75</accession>
<name>PGK_AZOC5</name>
<organism>
    <name type="scientific">Azorhizobium caulinodans (strain ATCC 43989 / DSM 5975 / JCM 20966 / LMG 6465 / NBRC 14845 / NCIMB 13405 / ORS 571)</name>
    <dbReference type="NCBI Taxonomy" id="438753"/>
    <lineage>
        <taxon>Bacteria</taxon>
        <taxon>Pseudomonadati</taxon>
        <taxon>Pseudomonadota</taxon>
        <taxon>Alphaproteobacteria</taxon>
        <taxon>Hyphomicrobiales</taxon>
        <taxon>Xanthobacteraceae</taxon>
        <taxon>Azorhizobium</taxon>
    </lineage>
</organism>
<dbReference type="EC" id="2.7.2.3" evidence="1"/>
<dbReference type="EMBL" id="AP009384">
    <property type="protein sequence ID" value="BAF86500.1"/>
    <property type="molecule type" value="Genomic_DNA"/>
</dbReference>
<dbReference type="RefSeq" id="WP_012169033.1">
    <property type="nucleotide sequence ID" value="NC_009937.1"/>
</dbReference>
<dbReference type="SMR" id="A8IM75"/>
<dbReference type="STRING" id="438753.AZC_0502"/>
<dbReference type="KEGG" id="azc:AZC_0502"/>
<dbReference type="eggNOG" id="COG0126">
    <property type="taxonomic scope" value="Bacteria"/>
</dbReference>
<dbReference type="HOGENOM" id="CLU_025427_0_2_5"/>
<dbReference type="UniPathway" id="UPA00109">
    <property type="reaction ID" value="UER00185"/>
</dbReference>
<dbReference type="Proteomes" id="UP000000270">
    <property type="component" value="Chromosome"/>
</dbReference>
<dbReference type="GO" id="GO:0005829">
    <property type="term" value="C:cytosol"/>
    <property type="evidence" value="ECO:0007669"/>
    <property type="project" value="TreeGrafter"/>
</dbReference>
<dbReference type="GO" id="GO:0043531">
    <property type="term" value="F:ADP binding"/>
    <property type="evidence" value="ECO:0007669"/>
    <property type="project" value="TreeGrafter"/>
</dbReference>
<dbReference type="GO" id="GO:0005524">
    <property type="term" value="F:ATP binding"/>
    <property type="evidence" value="ECO:0007669"/>
    <property type="project" value="UniProtKB-KW"/>
</dbReference>
<dbReference type="GO" id="GO:0004618">
    <property type="term" value="F:phosphoglycerate kinase activity"/>
    <property type="evidence" value="ECO:0007669"/>
    <property type="project" value="UniProtKB-UniRule"/>
</dbReference>
<dbReference type="GO" id="GO:0006094">
    <property type="term" value="P:gluconeogenesis"/>
    <property type="evidence" value="ECO:0007669"/>
    <property type="project" value="TreeGrafter"/>
</dbReference>
<dbReference type="GO" id="GO:0006096">
    <property type="term" value="P:glycolytic process"/>
    <property type="evidence" value="ECO:0007669"/>
    <property type="project" value="UniProtKB-UniRule"/>
</dbReference>
<dbReference type="CDD" id="cd00318">
    <property type="entry name" value="Phosphoglycerate_kinase"/>
    <property type="match status" value="1"/>
</dbReference>
<dbReference type="FunFam" id="3.40.50.1260:FF:000006">
    <property type="entry name" value="Phosphoglycerate kinase"/>
    <property type="match status" value="1"/>
</dbReference>
<dbReference type="FunFam" id="3.40.50.1260:FF:000031">
    <property type="entry name" value="Phosphoglycerate kinase 1"/>
    <property type="match status" value="1"/>
</dbReference>
<dbReference type="Gene3D" id="3.40.50.1260">
    <property type="entry name" value="Phosphoglycerate kinase, N-terminal domain"/>
    <property type="match status" value="2"/>
</dbReference>
<dbReference type="HAMAP" id="MF_00145">
    <property type="entry name" value="Phosphoglyc_kinase"/>
    <property type="match status" value="1"/>
</dbReference>
<dbReference type="InterPro" id="IPR001576">
    <property type="entry name" value="Phosphoglycerate_kinase"/>
</dbReference>
<dbReference type="InterPro" id="IPR015911">
    <property type="entry name" value="Phosphoglycerate_kinase_CS"/>
</dbReference>
<dbReference type="InterPro" id="IPR015824">
    <property type="entry name" value="Phosphoglycerate_kinase_N"/>
</dbReference>
<dbReference type="InterPro" id="IPR036043">
    <property type="entry name" value="Phosphoglycerate_kinase_sf"/>
</dbReference>
<dbReference type="PANTHER" id="PTHR11406">
    <property type="entry name" value="PHOSPHOGLYCERATE KINASE"/>
    <property type="match status" value="1"/>
</dbReference>
<dbReference type="PANTHER" id="PTHR11406:SF23">
    <property type="entry name" value="PHOSPHOGLYCERATE KINASE 1, CHLOROPLASTIC-RELATED"/>
    <property type="match status" value="1"/>
</dbReference>
<dbReference type="Pfam" id="PF00162">
    <property type="entry name" value="PGK"/>
    <property type="match status" value="1"/>
</dbReference>
<dbReference type="PIRSF" id="PIRSF000724">
    <property type="entry name" value="Pgk"/>
    <property type="match status" value="1"/>
</dbReference>
<dbReference type="PRINTS" id="PR00477">
    <property type="entry name" value="PHGLYCKINASE"/>
</dbReference>
<dbReference type="SUPFAM" id="SSF53748">
    <property type="entry name" value="Phosphoglycerate kinase"/>
    <property type="match status" value="1"/>
</dbReference>
<dbReference type="PROSITE" id="PS00111">
    <property type="entry name" value="PGLYCERATE_KINASE"/>
    <property type="match status" value="1"/>
</dbReference>
<proteinExistence type="inferred from homology"/>
<feature type="chain" id="PRO_1000203318" description="Phosphoglycerate kinase">
    <location>
        <begin position="1"/>
        <end position="396"/>
    </location>
</feature>
<feature type="binding site" evidence="1">
    <location>
        <begin position="22"/>
        <end position="24"/>
    </location>
    <ligand>
        <name>substrate</name>
    </ligand>
</feature>
<feature type="binding site" evidence="1">
    <location>
        <position position="37"/>
    </location>
    <ligand>
        <name>substrate</name>
    </ligand>
</feature>
<feature type="binding site" evidence="1">
    <location>
        <begin position="60"/>
        <end position="63"/>
    </location>
    <ligand>
        <name>substrate</name>
    </ligand>
</feature>
<feature type="binding site" evidence="1">
    <location>
        <position position="118"/>
    </location>
    <ligand>
        <name>substrate</name>
    </ligand>
</feature>
<feature type="binding site" evidence="1">
    <location>
        <position position="151"/>
    </location>
    <ligand>
        <name>substrate</name>
    </ligand>
</feature>
<feature type="binding site" evidence="1">
    <location>
        <position position="201"/>
    </location>
    <ligand>
        <name>ATP</name>
        <dbReference type="ChEBI" id="CHEBI:30616"/>
    </ligand>
</feature>
<feature type="binding site" evidence="1">
    <location>
        <position position="323"/>
    </location>
    <ligand>
        <name>ATP</name>
        <dbReference type="ChEBI" id="CHEBI:30616"/>
    </ligand>
</feature>
<feature type="binding site" evidence="1">
    <location>
        <begin position="353"/>
        <end position="356"/>
    </location>
    <ligand>
        <name>ATP</name>
        <dbReference type="ChEBI" id="CHEBI:30616"/>
    </ligand>
</feature>
<reference key="1">
    <citation type="submission" date="2007-04" db="EMBL/GenBank/DDBJ databases">
        <title>Complete genome sequence of the nitrogen-fixing bacterium Azorhizobium caulinodans ORS571.</title>
        <authorList>
            <person name="Lee K.B."/>
            <person name="Backer P.D."/>
            <person name="Aono T."/>
            <person name="Liu C.T."/>
            <person name="Suzuki S."/>
            <person name="Suzuki T."/>
            <person name="Kaneko T."/>
            <person name="Yamada M."/>
            <person name="Tabata S."/>
            <person name="Kupfer D.M."/>
            <person name="Najar F.Z."/>
            <person name="Wiley G.B."/>
            <person name="Roe B."/>
            <person name="Binnewies T."/>
            <person name="Ussery D."/>
            <person name="Vereecke D."/>
            <person name="Gevers D."/>
            <person name="Holsters M."/>
            <person name="Oyaizu H."/>
        </authorList>
    </citation>
    <scope>NUCLEOTIDE SEQUENCE [LARGE SCALE GENOMIC DNA]</scope>
    <source>
        <strain>ATCC 43989 / DSM 5975 / JCM 20966 / LMG 6465 / NBRC 14845 / NCIMB 13405 / ORS 571</strain>
    </source>
</reference>
<evidence type="ECO:0000255" key="1">
    <source>
        <dbReference type="HAMAP-Rule" id="MF_00145"/>
    </source>
</evidence>
<gene>
    <name evidence="1" type="primary">pgk</name>
    <name type="ordered locus">AZC_0502</name>
</gene>